<evidence type="ECO:0000255" key="1">
    <source>
        <dbReference type="HAMAP-Rule" id="MF_01643"/>
    </source>
</evidence>
<protein>
    <recommendedName>
        <fullName evidence="1">Formate-dependent phosphoribosylglycinamide formyltransferase</fullName>
        <ecNumber evidence="1">6.3.1.21</ecNumber>
    </recommendedName>
    <alternativeName>
        <fullName evidence="1">5'-phosphoribosylglycinamide transformylase 2</fullName>
    </alternativeName>
    <alternativeName>
        <fullName evidence="1">Formate-dependent GAR transformylase</fullName>
    </alternativeName>
    <alternativeName>
        <fullName evidence="1">GAR transformylase 2</fullName>
        <shortName evidence="1">GART 2</shortName>
    </alternativeName>
    <alternativeName>
        <fullName evidence="1">Non-folate glycinamide ribonucleotide transformylase</fullName>
    </alternativeName>
    <alternativeName>
        <fullName evidence="1">Phosphoribosylglycinamide formyltransferase 2</fullName>
    </alternativeName>
</protein>
<proteinExistence type="inferred from homology"/>
<feature type="chain" id="PRO_0000319277" description="Formate-dependent phosphoribosylglycinamide formyltransferase">
    <location>
        <begin position="1"/>
        <end position="402"/>
    </location>
</feature>
<feature type="domain" description="ATP-grasp" evidence="1">
    <location>
        <begin position="120"/>
        <end position="316"/>
    </location>
</feature>
<feature type="binding site" evidence="1">
    <location>
        <begin position="23"/>
        <end position="24"/>
    </location>
    <ligand>
        <name>N(1)-(5-phospho-beta-D-ribosyl)glycinamide</name>
        <dbReference type="ChEBI" id="CHEBI:143788"/>
    </ligand>
</feature>
<feature type="binding site" evidence="1">
    <location>
        <position position="83"/>
    </location>
    <ligand>
        <name>N(1)-(5-phospho-beta-D-ribosyl)glycinamide</name>
        <dbReference type="ChEBI" id="CHEBI:143788"/>
    </ligand>
</feature>
<feature type="binding site" evidence="1">
    <location>
        <position position="115"/>
    </location>
    <ligand>
        <name>ATP</name>
        <dbReference type="ChEBI" id="CHEBI:30616"/>
    </ligand>
</feature>
<feature type="binding site" evidence="1">
    <location>
        <position position="156"/>
    </location>
    <ligand>
        <name>ATP</name>
        <dbReference type="ChEBI" id="CHEBI:30616"/>
    </ligand>
</feature>
<feature type="binding site" evidence="1">
    <location>
        <begin position="196"/>
        <end position="199"/>
    </location>
    <ligand>
        <name>ATP</name>
        <dbReference type="ChEBI" id="CHEBI:30616"/>
    </ligand>
</feature>
<feature type="binding site" evidence="1">
    <location>
        <position position="204"/>
    </location>
    <ligand>
        <name>ATP</name>
        <dbReference type="ChEBI" id="CHEBI:30616"/>
    </ligand>
</feature>
<feature type="binding site" evidence="1">
    <location>
        <position position="274"/>
    </location>
    <ligand>
        <name>Mg(2+)</name>
        <dbReference type="ChEBI" id="CHEBI:18420"/>
    </ligand>
</feature>
<feature type="binding site" evidence="1">
    <location>
        <position position="287"/>
    </location>
    <ligand>
        <name>Mg(2+)</name>
        <dbReference type="ChEBI" id="CHEBI:18420"/>
    </ligand>
</feature>
<feature type="binding site" evidence="1">
    <location>
        <position position="294"/>
    </location>
    <ligand>
        <name>N(1)-(5-phospho-beta-D-ribosyl)glycinamide</name>
        <dbReference type="ChEBI" id="CHEBI:143788"/>
    </ligand>
</feature>
<feature type="binding site" evidence="1">
    <location>
        <position position="364"/>
    </location>
    <ligand>
        <name>N(1)-(5-phospho-beta-D-ribosyl)glycinamide</name>
        <dbReference type="ChEBI" id="CHEBI:143788"/>
    </ligand>
</feature>
<feature type="binding site" evidence="1">
    <location>
        <begin position="371"/>
        <end position="372"/>
    </location>
    <ligand>
        <name>N(1)-(5-phospho-beta-D-ribosyl)glycinamide</name>
        <dbReference type="ChEBI" id="CHEBI:143788"/>
    </ligand>
</feature>
<name>PURT_IGNH4</name>
<organism>
    <name type="scientific">Ignicoccus hospitalis (strain KIN4/I / DSM 18386 / JCM 14125)</name>
    <dbReference type="NCBI Taxonomy" id="453591"/>
    <lineage>
        <taxon>Archaea</taxon>
        <taxon>Thermoproteota</taxon>
        <taxon>Thermoprotei</taxon>
        <taxon>Desulfurococcales</taxon>
        <taxon>Desulfurococcaceae</taxon>
        <taxon>Ignicoccus</taxon>
    </lineage>
</organism>
<comment type="function">
    <text evidence="1">Involved in the de novo purine biosynthesis. Catalyzes the transfer of formate to 5-phospho-ribosyl-glycinamide (GAR), producing 5-phospho-ribosyl-N-formylglycinamide (FGAR). Formate is provided by PurU via hydrolysis of 10-formyl-tetrahydrofolate.</text>
</comment>
<comment type="catalytic activity">
    <reaction evidence="1">
        <text>N(1)-(5-phospho-beta-D-ribosyl)glycinamide + formate + ATP = N(2)-formyl-N(1)-(5-phospho-beta-D-ribosyl)glycinamide + ADP + phosphate + H(+)</text>
        <dbReference type="Rhea" id="RHEA:24829"/>
        <dbReference type="ChEBI" id="CHEBI:15378"/>
        <dbReference type="ChEBI" id="CHEBI:15740"/>
        <dbReference type="ChEBI" id="CHEBI:30616"/>
        <dbReference type="ChEBI" id="CHEBI:43474"/>
        <dbReference type="ChEBI" id="CHEBI:143788"/>
        <dbReference type="ChEBI" id="CHEBI:147286"/>
        <dbReference type="ChEBI" id="CHEBI:456216"/>
        <dbReference type="EC" id="6.3.1.21"/>
    </reaction>
    <physiologicalReaction direction="left-to-right" evidence="1">
        <dbReference type="Rhea" id="RHEA:24830"/>
    </physiologicalReaction>
</comment>
<comment type="pathway">
    <text evidence="1">Purine metabolism; IMP biosynthesis via de novo pathway; N(2)-formyl-N(1)-(5-phospho-D-ribosyl)glycinamide from N(1)-(5-phospho-D-ribosyl)glycinamide (formate route): step 1/1.</text>
</comment>
<comment type="subunit">
    <text evidence="1">Homodimer.</text>
</comment>
<comment type="similarity">
    <text evidence="1">Belongs to the PurK/PurT family.</text>
</comment>
<reference key="1">
    <citation type="journal article" date="2008" name="Genome Biol.">
        <title>A genomic analysis of the archaeal system Ignicoccus hospitalis-Nanoarchaeum equitans.</title>
        <authorList>
            <person name="Podar M."/>
            <person name="Anderson I."/>
            <person name="Makarova K.S."/>
            <person name="Elkins J.G."/>
            <person name="Ivanova N."/>
            <person name="Wall M.A."/>
            <person name="Lykidis A."/>
            <person name="Mavromatis K."/>
            <person name="Sun H."/>
            <person name="Hudson M.E."/>
            <person name="Chen W."/>
            <person name="Deciu C."/>
            <person name="Hutchison D."/>
            <person name="Eads J.R."/>
            <person name="Anderson A."/>
            <person name="Fernandes F."/>
            <person name="Szeto E."/>
            <person name="Lapidus A."/>
            <person name="Kyrpides N.C."/>
            <person name="Saier M.H. Jr."/>
            <person name="Richardson P.M."/>
            <person name="Rachel R."/>
            <person name="Huber H."/>
            <person name="Eisen J.A."/>
            <person name="Koonin E.V."/>
            <person name="Keller M."/>
            <person name="Stetter K.O."/>
        </authorList>
    </citation>
    <scope>NUCLEOTIDE SEQUENCE [LARGE SCALE GENOMIC DNA]</scope>
    <source>
        <strain>KIN4/I / DSM 18386 / JCM 14125</strain>
    </source>
</reference>
<accession>A8ACE0</accession>
<gene>
    <name evidence="1" type="primary">purT</name>
    <name type="ordered locus">Igni_1416</name>
</gene>
<sequence>MREVLGTALTSSSQKALLLGSGELGKEVVIELQRLGVEVVAVDRYDRAPAMHVAHRRYVIDMLDYDQVVDVVRRERPDVIIPEVEAINTDALVDLEKEGYFVVPNARAVKITMNRIELRRLAAEKVGVPTTRYAFAHNEDEAAEACEKVGYPCLIKPEMSSSGHGHTLASSPEEAREGFKRALKEARGKSERAIVEEFVEIDRELTALTYRHDTGNGIETVPLPPVEHKRPKGIYYYYESWHPATVNDEVVKKAKDIAVKVVNELGGLGIFGVEILVTKDGRVLFSEVSPRPHDTGLVTLASMELSEFAIHARAVLGLPVPEPKLLTPAASRVVLAEEALEPPCLKGVGEALKVKGVQLRWFAKPRSYKERRMGVLLATGSTVEEALERVRRAAGFLKVVKC</sequence>
<dbReference type="EC" id="6.3.1.21" evidence="1"/>
<dbReference type="EMBL" id="CP000816">
    <property type="protein sequence ID" value="ABU82592.1"/>
    <property type="molecule type" value="Genomic_DNA"/>
</dbReference>
<dbReference type="SMR" id="A8ACE0"/>
<dbReference type="STRING" id="453591.Igni_1416"/>
<dbReference type="KEGG" id="iho:Igni_1416"/>
<dbReference type="eggNOG" id="arCOG01598">
    <property type="taxonomic scope" value="Archaea"/>
</dbReference>
<dbReference type="HOGENOM" id="CLU_011534_1_3_2"/>
<dbReference type="OrthoDB" id="9299at2157"/>
<dbReference type="PhylomeDB" id="A8ACE0"/>
<dbReference type="UniPathway" id="UPA00074">
    <property type="reaction ID" value="UER00127"/>
</dbReference>
<dbReference type="Proteomes" id="UP000000262">
    <property type="component" value="Chromosome"/>
</dbReference>
<dbReference type="GO" id="GO:0005829">
    <property type="term" value="C:cytosol"/>
    <property type="evidence" value="ECO:0007669"/>
    <property type="project" value="TreeGrafter"/>
</dbReference>
<dbReference type="GO" id="GO:0005524">
    <property type="term" value="F:ATP binding"/>
    <property type="evidence" value="ECO:0007669"/>
    <property type="project" value="UniProtKB-UniRule"/>
</dbReference>
<dbReference type="GO" id="GO:0000287">
    <property type="term" value="F:magnesium ion binding"/>
    <property type="evidence" value="ECO:0007669"/>
    <property type="project" value="InterPro"/>
</dbReference>
<dbReference type="GO" id="GO:0043815">
    <property type="term" value="F:phosphoribosylglycinamide formyltransferase 2 activity"/>
    <property type="evidence" value="ECO:0007669"/>
    <property type="project" value="UniProtKB-UniRule"/>
</dbReference>
<dbReference type="GO" id="GO:0004644">
    <property type="term" value="F:phosphoribosylglycinamide formyltransferase activity"/>
    <property type="evidence" value="ECO:0007669"/>
    <property type="project" value="InterPro"/>
</dbReference>
<dbReference type="GO" id="GO:0006189">
    <property type="term" value="P:'de novo' IMP biosynthetic process"/>
    <property type="evidence" value="ECO:0007669"/>
    <property type="project" value="UniProtKB-UniRule"/>
</dbReference>
<dbReference type="FunFam" id="3.40.50.20:FF:000022">
    <property type="entry name" value="Formate-dependent phosphoribosylglycinamide formyltransferase"/>
    <property type="match status" value="1"/>
</dbReference>
<dbReference type="Gene3D" id="3.40.50.20">
    <property type="match status" value="1"/>
</dbReference>
<dbReference type="Gene3D" id="3.30.1490.20">
    <property type="entry name" value="ATP-grasp fold, A domain"/>
    <property type="match status" value="1"/>
</dbReference>
<dbReference type="Gene3D" id="3.30.470.20">
    <property type="entry name" value="ATP-grasp fold, B domain"/>
    <property type="match status" value="1"/>
</dbReference>
<dbReference type="HAMAP" id="MF_01643">
    <property type="entry name" value="PurT"/>
    <property type="match status" value="1"/>
</dbReference>
<dbReference type="InterPro" id="IPR011761">
    <property type="entry name" value="ATP-grasp"/>
</dbReference>
<dbReference type="InterPro" id="IPR003135">
    <property type="entry name" value="ATP-grasp_carboxylate-amine"/>
</dbReference>
<dbReference type="InterPro" id="IPR013815">
    <property type="entry name" value="ATP_grasp_subdomain_1"/>
</dbReference>
<dbReference type="InterPro" id="IPR016185">
    <property type="entry name" value="PreATP-grasp_dom_sf"/>
</dbReference>
<dbReference type="InterPro" id="IPR005862">
    <property type="entry name" value="PurT"/>
</dbReference>
<dbReference type="InterPro" id="IPR054350">
    <property type="entry name" value="PurT/PurK_preATP-grasp"/>
</dbReference>
<dbReference type="InterPro" id="IPR048740">
    <property type="entry name" value="PurT_C"/>
</dbReference>
<dbReference type="NCBIfam" id="NF006766">
    <property type="entry name" value="PRK09288.1"/>
    <property type="match status" value="1"/>
</dbReference>
<dbReference type="PANTHER" id="PTHR43055">
    <property type="entry name" value="FORMATE-DEPENDENT PHOSPHORIBOSYLGLYCINAMIDE FORMYLTRANSFERASE"/>
    <property type="match status" value="1"/>
</dbReference>
<dbReference type="PANTHER" id="PTHR43055:SF1">
    <property type="entry name" value="FORMATE-DEPENDENT PHOSPHORIBOSYLGLYCINAMIDE FORMYLTRANSFERASE"/>
    <property type="match status" value="1"/>
</dbReference>
<dbReference type="Pfam" id="PF02222">
    <property type="entry name" value="ATP-grasp"/>
    <property type="match status" value="1"/>
</dbReference>
<dbReference type="Pfam" id="PF21244">
    <property type="entry name" value="PurT_C"/>
    <property type="match status" value="1"/>
</dbReference>
<dbReference type="Pfam" id="PF22660">
    <property type="entry name" value="RS_preATP-grasp-like"/>
    <property type="match status" value="1"/>
</dbReference>
<dbReference type="SUPFAM" id="SSF56059">
    <property type="entry name" value="Glutathione synthetase ATP-binding domain-like"/>
    <property type="match status" value="1"/>
</dbReference>
<dbReference type="SUPFAM" id="SSF52440">
    <property type="entry name" value="PreATP-grasp domain"/>
    <property type="match status" value="1"/>
</dbReference>
<dbReference type="PROSITE" id="PS50975">
    <property type="entry name" value="ATP_GRASP"/>
    <property type="match status" value="1"/>
</dbReference>
<keyword id="KW-0067">ATP-binding</keyword>
<keyword id="KW-0436">Ligase</keyword>
<keyword id="KW-0460">Magnesium</keyword>
<keyword id="KW-0479">Metal-binding</keyword>
<keyword id="KW-0547">Nucleotide-binding</keyword>
<keyword id="KW-0658">Purine biosynthesis</keyword>
<keyword id="KW-1185">Reference proteome</keyword>